<gene>
    <name type="primary">ilvA</name>
    <name type="ordered locus">SA1866</name>
</gene>
<sequence length="422" mass="46970">MTVKTTVSTKDIDEAFLRLKDIVKETPLQLDHYLSQKYDCKVYLKREDLQWVRSFKLRGAYNAISVLSDEAKSKGITCASAGNHAQGVAYTAKKLNLNAVIFMPVTTPLQKVNQVKFFGNSNVEVVLTGDTFDHCLAEALTYTSEHQMNFIDPFNNVHTISGQGTLAKEMLEQSKTDNVNFDYLFAAIGGGGLISGISTYFKTYSPTTKIIGVEPSGASSMYESVVVNNQVVTLPNIDKFVDGASVARVGDITFEIAKENVDDYVQVDEGAVCSTILDMYSKQAIVAEPAGALSVSALENYKDHIMGKTVVCVISGGNNDINRMKEIEERSLLYEEMKHYFILNFPQRPGALREFVNDVLGPQDDITKFEYLKKSSQNTGTVIIGIQLKDHDDLIQLKQRVNHFDPSNIYINENKMLYSLLI</sequence>
<comment type="function">
    <text evidence="1">Catalyzes the anaerobic formation of alpha-ketobutyrate and ammonia from threonine in a two-step reaction. The first step involved a dehydration of threonine and a production of enamine intermediates (aminocrotonate), which tautomerizes to its imine form (iminobutyrate). Both intermediates are unstable and short-lived. The second step is the nonenzymatic hydrolysis of the enamine/imine intermediates to form 2-ketobutyrate and free ammonia. In the low water environment of the cell, the second step is accelerated by RidA (By similarity).</text>
</comment>
<comment type="catalytic activity">
    <reaction>
        <text>L-threonine = 2-oxobutanoate + NH4(+)</text>
        <dbReference type="Rhea" id="RHEA:22108"/>
        <dbReference type="ChEBI" id="CHEBI:16763"/>
        <dbReference type="ChEBI" id="CHEBI:28938"/>
        <dbReference type="ChEBI" id="CHEBI:57926"/>
        <dbReference type="EC" id="4.3.1.19"/>
    </reaction>
</comment>
<comment type="cofactor">
    <cofactor evidence="1">
        <name>pyridoxal 5'-phosphate</name>
        <dbReference type="ChEBI" id="CHEBI:597326"/>
    </cofactor>
</comment>
<comment type="pathway">
    <text>Amino-acid biosynthesis; L-isoleucine biosynthesis; 2-oxobutanoate from L-threonine: step 1/1.</text>
</comment>
<comment type="subunit">
    <text evidence="1">Homotetramer.</text>
</comment>
<comment type="similarity">
    <text evidence="3">Belongs to the serine/threonine dehydratase family.</text>
</comment>
<reference key="1">
    <citation type="journal article" date="2001" name="Lancet">
        <title>Whole genome sequencing of meticillin-resistant Staphylococcus aureus.</title>
        <authorList>
            <person name="Kuroda M."/>
            <person name="Ohta T."/>
            <person name="Uchiyama I."/>
            <person name="Baba T."/>
            <person name="Yuzawa H."/>
            <person name="Kobayashi I."/>
            <person name="Cui L."/>
            <person name="Oguchi A."/>
            <person name="Aoki K."/>
            <person name="Nagai Y."/>
            <person name="Lian J.-Q."/>
            <person name="Ito T."/>
            <person name="Kanamori M."/>
            <person name="Matsumaru H."/>
            <person name="Maruyama A."/>
            <person name="Murakami H."/>
            <person name="Hosoyama A."/>
            <person name="Mizutani-Ui Y."/>
            <person name="Takahashi N.K."/>
            <person name="Sawano T."/>
            <person name="Inoue R."/>
            <person name="Kaito C."/>
            <person name="Sekimizu K."/>
            <person name="Hirakawa H."/>
            <person name="Kuhara S."/>
            <person name="Goto S."/>
            <person name="Yabuzaki J."/>
            <person name="Kanehisa M."/>
            <person name="Yamashita A."/>
            <person name="Oshima K."/>
            <person name="Furuya K."/>
            <person name="Yoshino C."/>
            <person name="Shiba T."/>
            <person name="Hattori M."/>
            <person name="Ogasawara N."/>
            <person name="Hayashi H."/>
            <person name="Hiramatsu K."/>
        </authorList>
    </citation>
    <scope>NUCLEOTIDE SEQUENCE [LARGE SCALE GENOMIC DNA]</scope>
    <source>
        <strain>N315</strain>
    </source>
</reference>
<name>ILVA_STAAN</name>
<dbReference type="EC" id="4.3.1.19"/>
<dbReference type="EMBL" id="BA000018">
    <property type="protein sequence ID" value="BAB43148.1"/>
    <property type="molecule type" value="Genomic_DNA"/>
</dbReference>
<dbReference type="PIR" id="C89998">
    <property type="entry name" value="C89998"/>
</dbReference>
<dbReference type="RefSeq" id="WP_000216856.1">
    <property type="nucleotide sequence ID" value="NC_002745.2"/>
</dbReference>
<dbReference type="SMR" id="Q7A4H2"/>
<dbReference type="EnsemblBacteria" id="BAB43148">
    <property type="protein sequence ID" value="BAB43148"/>
    <property type="gene ID" value="BAB43148"/>
</dbReference>
<dbReference type="KEGG" id="sau:SA1866"/>
<dbReference type="HOGENOM" id="CLU_021152_4_2_9"/>
<dbReference type="UniPathway" id="UPA00047">
    <property type="reaction ID" value="UER00054"/>
</dbReference>
<dbReference type="GO" id="GO:0003941">
    <property type="term" value="F:L-serine ammonia-lyase activity"/>
    <property type="evidence" value="ECO:0007669"/>
    <property type="project" value="TreeGrafter"/>
</dbReference>
<dbReference type="GO" id="GO:0030170">
    <property type="term" value="F:pyridoxal phosphate binding"/>
    <property type="evidence" value="ECO:0007669"/>
    <property type="project" value="InterPro"/>
</dbReference>
<dbReference type="GO" id="GO:0004794">
    <property type="term" value="F:threonine deaminase activity"/>
    <property type="evidence" value="ECO:0007669"/>
    <property type="project" value="UniProtKB-EC"/>
</dbReference>
<dbReference type="GO" id="GO:0009097">
    <property type="term" value="P:isoleucine biosynthetic process"/>
    <property type="evidence" value="ECO:0007669"/>
    <property type="project" value="UniProtKB-UniPathway"/>
</dbReference>
<dbReference type="GO" id="GO:0006565">
    <property type="term" value="P:L-serine catabolic process"/>
    <property type="evidence" value="ECO:0007669"/>
    <property type="project" value="TreeGrafter"/>
</dbReference>
<dbReference type="GO" id="GO:0006567">
    <property type="term" value="P:threonine catabolic process"/>
    <property type="evidence" value="ECO:0007669"/>
    <property type="project" value="TreeGrafter"/>
</dbReference>
<dbReference type="GO" id="GO:0006566">
    <property type="term" value="P:threonine metabolic process"/>
    <property type="evidence" value="ECO:0000250"/>
    <property type="project" value="UniProtKB"/>
</dbReference>
<dbReference type="CDD" id="cd04907">
    <property type="entry name" value="ACT_ThrD-I_2"/>
    <property type="match status" value="1"/>
</dbReference>
<dbReference type="CDD" id="cd01562">
    <property type="entry name" value="Thr-dehyd"/>
    <property type="match status" value="1"/>
</dbReference>
<dbReference type="FunFam" id="3.40.1020.10:FF:000002">
    <property type="entry name" value="L-threonine dehydratase"/>
    <property type="match status" value="1"/>
</dbReference>
<dbReference type="FunFam" id="3.40.50.1100:FF:000005">
    <property type="entry name" value="Threonine dehydratase catabolic"/>
    <property type="match status" value="1"/>
</dbReference>
<dbReference type="Gene3D" id="3.40.50.1100">
    <property type="match status" value="2"/>
</dbReference>
<dbReference type="Gene3D" id="3.40.1020.10">
    <property type="entry name" value="Biosynthetic Threonine Deaminase, Domain 3"/>
    <property type="match status" value="1"/>
</dbReference>
<dbReference type="InterPro" id="IPR045865">
    <property type="entry name" value="ACT-like_dom_sf"/>
</dbReference>
<dbReference type="InterPro" id="IPR011820">
    <property type="entry name" value="IlvA"/>
</dbReference>
<dbReference type="InterPro" id="IPR050147">
    <property type="entry name" value="Ser/Thr_Dehydratase"/>
</dbReference>
<dbReference type="InterPro" id="IPR000634">
    <property type="entry name" value="Ser/Thr_deHydtase_PyrdxlP-BS"/>
</dbReference>
<dbReference type="InterPro" id="IPR001721">
    <property type="entry name" value="TD_ACT-like"/>
</dbReference>
<dbReference type="InterPro" id="IPR038110">
    <property type="entry name" value="TD_ACT-like_sf"/>
</dbReference>
<dbReference type="InterPro" id="IPR001926">
    <property type="entry name" value="TrpB-like_PALP"/>
</dbReference>
<dbReference type="InterPro" id="IPR036052">
    <property type="entry name" value="TrpB-like_PALP_sf"/>
</dbReference>
<dbReference type="NCBIfam" id="NF006390">
    <property type="entry name" value="PRK08639.1"/>
    <property type="match status" value="1"/>
</dbReference>
<dbReference type="NCBIfam" id="TIGR02079">
    <property type="entry name" value="THD1"/>
    <property type="match status" value="1"/>
</dbReference>
<dbReference type="PANTHER" id="PTHR48078:SF11">
    <property type="entry name" value="THREONINE DEHYDRATASE, MITOCHONDRIAL"/>
    <property type="match status" value="1"/>
</dbReference>
<dbReference type="PANTHER" id="PTHR48078">
    <property type="entry name" value="THREONINE DEHYDRATASE, MITOCHONDRIAL-RELATED"/>
    <property type="match status" value="1"/>
</dbReference>
<dbReference type="Pfam" id="PF00291">
    <property type="entry name" value="PALP"/>
    <property type="match status" value="1"/>
</dbReference>
<dbReference type="Pfam" id="PF00585">
    <property type="entry name" value="Thr_dehydrat_C"/>
    <property type="match status" value="1"/>
</dbReference>
<dbReference type="SUPFAM" id="SSF55021">
    <property type="entry name" value="ACT-like"/>
    <property type="match status" value="1"/>
</dbReference>
<dbReference type="SUPFAM" id="SSF53686">
    <property type="entry name" value="Tryptophan synthase beta subunit-like PLP-dependent enzymes"/>
    <property type="match status" value="1"/>
</dbReference>
<dbReference type="PROSITE" id="PS51672">
    <property type="entry name" value="ACT_LIKE"/>
    <property type="match status" value="1"/>
</dbReference>
<dbReference type="PROSITE" id="PS00165">
    <property type="entry name" value="DEHYDRATASE_SER_THR"/>
    <property type="match status" value="1"/>
</dbReference>
<evidence type="ECO:0000250" key="1"/>
<evidence type="ECO:0000255" key="2">
    <source>
        <dbReference type="PROSITE-ProRule" id="PRU01008"/>
    </source>
</evidence>
<evidence type="ECO:0000305" key="3"/>
<keyword id="KW-0028">Amino-acid biosynthesis</keyword>
<keyword id="KW-0100">Branched-chain amino acid biosynthesis</keyword>
<keyword id="KW-0412">Isoleucine biosynthesis</keyword>
<keyword id="KW-0456">Lyase</keyword>
<keyword id="KW-0663">Pyridoxal phosphate</keyword>
<proteinExistence type="inferred from homology"/>
<protein>
    <recommendedName>
        <fullName>L-threonine dehydratase biosynthetic IlvA</fullName>
        <ecNumber>4.3.1.19</ecNumber>
    </recommendedName>
    <alternativeName>
        <fullName>Threonine deaminase</fullName>
    </alternativeName>
</protein>
<feature type="chain" id="PRO_0000234308" description="L-threonine dehydratase biosynthetic IlvA">
    <location>
        <begin position="1"/>
        <end position="422"/>
    </location>
</feature>
<feature type="domain" description="ACT-like" evidence="2">
    <location>
        <begin position="339"/>
        <end position="413"/>
    </location>
</feature>
<feature type="binding site" evidence="1">
    <location>
        <position position="83"/>
    </location>
    <ligand>
        <name>pyridoxal 5'-phosphate</name>
        <dbReference type="ChEBI" id="CHEBI:597326"/>
    </ligand>
</feature>
<feature type="binding site" evidence="1">
    <location>
        <begin position="189"/>
        <end position="193"/>
    </location>
    <ligand>
        <name>pyridoxal 5'-phosphate</name>
        <dbReference type="ChEBI" id="CHEBI:597326"/>
    </ligand>
</feature>
<feature type="binding site" evidence="1">
    <location>
        <position position="315"/>
    </location>
    <ligand>
        <name>pyridoxal 5'-phosphate</name>
        <dbReference type="ChEBI" id="CHEBI:597326"/>
    </ligand>
</feature>
<feature type="modified residue" description="N6-(pyridoxal phosphate)lysine" evidence="1">
    <location>
        <position position="56"/>
    </location>
</feature>
<accession>Q7A4H2</accession>
<organism>
    <name type="scientific">Staphylococcus aureus (strain N315)</name>
    <dbReference type="NCBI Taxonomy" id="158879"/>
    <lineage>
        <taxon>Bacteria</taxon>
        <taxon>Bacillati</taxon>
        <taxon>Bacillota</taxon>
        <taxon>Bacilli</taxon>
        <taxon>Bacillales</taxon>
        <taxon>Staphylococcaceae</taxon>
        <taxon>Staphylococcus</taxon>
    </lineage>
</organism>